<name>DNAJ_ACIBC</name>
<feature type="chain" id="PRO_1000137649" description="Chaperone protein DnaJ">
    <location>
        <begin position="1"/>
        <end position="370"/>
    </location>
</feature>
<feature type="domain" description="J" evidence="1">
    <location>
        <begin position="5"/>
        <end position="70"/>
    </location>
</feature>
<feature type="repeat" description="CXXCXGXG motif">
    <location>
        <begin position="147"/>
        <end position="154"/>
    </location>
</feature>
<feature type="repeat" description="CXXCXGXG motif">
    <location>
        <begin position="164"/>
        <end position="171"/>
    </location>
</feature>
<feature type="repeat" description="CXXCXGXG motif">
    <location>
        <begin position="186"/>
        <end position="193"/>
    </location>
</feature>
<feature type="repeat" description="CXXCXGXG motif">
    <location>
        <begin position="200"/>
        <end position="207"/>
    </location>
</feature>
<feature type="zinc finger region" description="CR-type" evidence="1">
    <location>
        <begin position="134"/>
        <end position="212"/>
    </location>
</feature>
<feature type="region of interest" description="Disordered" evidence="2">
    <location>
        <begin position="351"/>
        <end position="370"/>
    </location>
</feature>
<feature type="binding site" evidence="1">
    <location>
        <position position="147"/>
    </location>
    <ligand>
        <name>Zn(2+)</name>
        <dbReference type="ChEBI" id="CHEBI:29105"/>
        <label>1</label>
    </ligand>
</feature>
<feature type="binding site" evidence="1">
    <location>
        <position position="150"/>
    </location>
    <ligand>
        <name>Zn(2+)</name>
        <dbReference type="ChEBI" id="CHEBI:29105"/>
        <label>1</label>
    </ligand>
</feature>
<feature type="binding site" evidence="1">
    <location>
        <position position="164"/>
    </location>
    <ligand>
        <name>Zn(2+)</name>
        <dbReference type="ChEBI" id="CHEBI:29105"/>
        <label>2</label>
    </ligand>
</feature>
<feature type="binding site" evidence="1">
    <location>
        <position position="167"/>
    </location>
    <ligand>
        <name>Zn(2+)</name>
        <dbReference type="ChEBI" id="CHEBI:29105"/>
        <label>2</label>
    </ligand>
</feature>
<feature type="binding site" evidence="1">
    <location>
        <position position="186"/>
    </location>
    <ligand>
        <name>Zn(2+)</name>
        <dbReference type="ChEBI" id="CHEBI:29105"/>
        <label>2</label>
    </ligand>
</feature>
<feature type="binding site" evidence="1">
    <location>
        <position position="189"/>
    </location>
    <ligand>
        <name>Zn(2+)</name>
        <dbReference type="ChEBI" id="CHEBI:29105"/>
        <label>2</label>
    </ligand>
</feature>
<feature type="binding site" evidence="1">
    <location>
        <position position="200"/>
    </location>
    <ligand>
        <name>Zn(2+)</name>
        <dbReference type="ChEBI" id="CHEBI:29105"/>
        <label>1</label>
    </ligand>
</feature>
<feature type="binding site" evidence="1">
    <location>
        <position position="203"/>
    </location>
    <ligand>
        <name>Zn(2+)</name>
        <dbReference type="ChEBI" id="CHEBI:29105"/>
        <label>1</label>
    </ligand>
</feature>
<accession>B2I2G6</accession>
<organism>
    <name type="scientific">Acinetobacter baumannii (strain ACICU)</name>
    <dbReference type="NCBI Taxonomy" id="405416"/>
    <lineage>
        <taxon>Bacteria</taxon>
        <taxon>Pseudomonadati</taxon>
        <taxon>Pseudomonadota</taxon>
        <taxon>Gammaproteobacteria</taxon>
        <taxon>Moraxellales</taxon>
        <taxon>Moraxellaceae</taxon>
        <taxon>Acinetobacter</taxon>
        <taxon>Acinetobacter calcoaceticus/baumannii complex</taxon>
    </lineage>
</organism>
<dbReference type="EMBL" id="CP000863">
    <property type="protein sequence ID" value="ACC58953.1"/>
    <property type="molecule type" value="Genomic_DNA"/>
</dbReference>
<dbReference type="RefSeq" id="WP_001119029.1">
    <property type="nucleotide sequence ID" value="NZ_CP031380.1"/>
</dbReference>
<dbReference type="SMR" id="B2I2G6"/>
<dbReference type="GeneID" id="92895684"/>
<dbReference type="KEGG" id="abc:ACICU_03644"/>
<dbReference type="HOGENOM" id="CLU_017633_0_7_6"/>
<dbReference type="Proteomes" id="UP000008839">
    <property type="component" value="Chromosome"/>
</dbReference>
<dbReference type="GO" id="GO:0005737">
    <property type="term" value="C:cytoplasm"/>
    <property type="evidence" value="ECO:0007669"/>
    <property type="project" value="UniProtKB-SubCell"/>
</dbReference>
<dbReference type="GO" id="GO:0005524">
    <property type="term" value="F:ATP binding"/>
    <property type="evidence" value="ECO:0007669"/>
    <property type="project" value="InterPro"/>
</dbReference>
<dbReference type="GO" id="GO:0031072">
    <property type="term" value="F:heat shock protein binding"/>
    <property type="evidence" value="ECO:0007669"/>
    <property type="project" value="InterPro"/>
</dbReference>
<dbReference type="GO" id="GO:0051082">
    <property type="term" value="F:unfolded protein binding"/>
    <property type="evidence" value="ECO:0007669"/>
    <property type="project" value="UniProtKB-UniRule"/>
</dbReference>
<dbReference type="GO" id="GO:0008270">
    <property type="term" value="F:zinc ion binding"/>
    <property type="evidence" value="ECO:0007669"/>
    <property type="project" value="UniProtKB-UniRule"/>
</dbReference>
<dbReference type="GO" id="GO:0051085">
    <property type="term" value="P:chaperone cofactor-dependent protein refolding"/>
    <property type="evidence" value="ECO:0007669"/>
    <property type="project" value="TreeGrafter"/>
</dbReference>
<dbReference type="GO" id="GO:0006260">
    <property type="term" value="P:DNA replication"/>
    <property type="evidence" value="ECO:0007669"/>
    <property type="project" value="UniProtKB-KW"/>
</dbReference>
<dbReference type="GO" id="GO:0042026">
    <property type="term" value="P:protein refolding"/>
    <property type="evidence" value="ECO:0007669"/>
    <property type="project" value="TreeGrafter"/>
</dbReference>
<dbReference type="GO" id="GO:0009408">
    <property type="term" value="P:response to heat"/>
    <property type="evidence" value="ECO:0007669"/>
    <property type="project" value="InterPro"/>
</dbReference>
<dbReference type="CDD" id="cd06257">
    <property type="entry name" value="DnaJ"/>
    <property type="match status" value="1"/>
</dbReference>
<dbReference type="CDD" id="cd10747">
    <property type="entry name" value="DnaJ_C"/>
    <property type="match status" value="1"/>
</dbReference>
<dbReference type="CDD" id="cd10719">
    <property type="entry name" value="DnaJ_zf"/>
    <property type="match status" value="1"/>
</dbReference>
<dbReference type="FunFam" id="1.10.287.110:FF:000034">
    <property type="entry name" value="Chaperone protein DnaJ"/>
    <property type="match status" value="1"/>
</dbReference>
<dbReference type="FunFam" id="2.10.230.10:FF:000002">
    <property type="entry name" value="Molecular chaperone DnaJ"/>
    <property type="match status" value="1"/>
</dbReference>
<dbReference type="FunFam" id="2.60.260.20:FF:000004">
    <property type="entry name" value="Molecular chaperone DnaJ"/>
    <property type="match status" value="1"/>
</dbReference>
<dbReference type="Gene3D" id="1.10.287.110">
    <property type="entry name" value="DnaJ domain"/>
    <property type="match status" value="1"/>
</dbReference>
<dbReference type="Gene3D" id="2.10.230.10">
    <property type="entry name" value="Heat shock protein DnaJ, cysteine-rich domain"/>
    <property type="match status" value="1"/>
</dbReference>
<dbReference type="Gene3D" id="2.60.260.20">
    <property type="entry name" value="Urease metallochaperone UreE, N-terminal domain"/>
    <property type="match status" value="2"/>
</dbReference>
<dbReference type="HAMAP" id="MF_01152">
    <property type="entry name" value="DnaJ"/>
    <property type="match status" value="1"/>
</dbReference>
<dbReference type="InterPro" id="IPR012724">
    <property type="entry name" value="DnaJ"/>
</dbReference>
<dbReference type="InterPro" id="IPR002939">
    <property type="entry name" value="DnaJ_C"/>
</dbReference>
<dbReference type="InterPro" id="IPR001623">
    <property type="entry name" value="DnaJ_domain"/>
</dbReference>
<dbReference type="InterPro" id="IPR018253">
    <property type="entry name" value="DnaJ_domain_CS"/>
</dbReference>
<dbReference type="InterPro" id="IPR008971">
    <property type="entry name" value="HSP40/DnaJ_pept-bd"/>
</dbReference>
<dbReference type="InterPro" id="IPR001305">
    <property type="entry name" value="HSP_DnaJ_Cys-rich_dom"/>
</dbReference>
<dbReference type="InterPro" id="IPR036410">
    <property type="entry name" value="HSP_DnaJ_Cys-rich_dom_sf"/>
</dbReference>
<dbReference type="InterPro" id="IPR036869">
    <property type="entry name" value="J_dom_sf"/>
</dbReference>
<dbReference type="NCBIfam" id="TIGR02349">
    <property type="entry name" value="DnaJ_bact"/>
    <property type="match status" value="1"/>
</dbReference>
<dbReference type="NCBIfam" id="NF008035">
    <property type="entry name" value="PRK10767.1"/>
    <property type="match status" value="1"/>
</dbReference>
<dbReference type="PANTHER" id="PTHR43096:SF48">
    <property type="entry name" value="CHAPERONE PROTEIN DNAJ"/>
    <property type="match status" value="1"/>
</dbReference>
<dbReference type="PANTHER" id="PTHR43096">
    <property type="entry name" value="DNAJ HOMOLOG 1, MITOCHONDRIAL-RELATED"/>
    <property type="match status" value="1"/>
</dbReference>
<dbReference type="Pfam" id="PF00226">
    <property type="entry name" value="DnaJ"/>
    <property type="match status" value="1"/>
</dbReference>
<dbReference type="Pfam" id="PF01556">
    <property type="entry name" value="DnaJ_C"/>
    <property type="match status" value="1"/>
</dbReference>
<dbReference type="Pfam" id="PF00684">
    <property type="entry name" value="DnaJ_CXXCXGXG"/>
    <property type="match status" value="1"/>
</dbReference>
<dbReference type="PRINTS" id="PR00625">
    <property type="entry name" value="JDOMAIN"/>
</dbReference>
<dbReference type="SMART" id="SM00271">
    <property type="entry name" value="DnaJ"/>
    <property type="match status" value="1"/>
</dbReference>
<dbReference type="SUPFAM" id="SSF46565">
    <property type="entry name" value="Chaperone J-domain"/>
    <property type="match status" value="1"/>
</dbReference>
<dbReference type="SUPFAM" id="SSF57938">
    <property type="entry name" value="DnaJ/Hsp40 cysteine-rich domain"/>
    <property type="match status" value="1"/>
</dbReference>
<dbReference type="SUPFAM" id="SSF49493">
    <property type="entry name" value="HSP40/DnaJ peptide-binding domain"/>
    <property type="match status" value="2"/>
</dbReference>
<dbReference type="PROSITE" id="PS00636">
    <property type="entry name" value="DNAJ_1"/>
    <property type="match status" value="1"/>
</dbReference>
<dbReference type="PROSITE" id="PS50076">
    <property type="entry name" value="DNAJ_2"/>
    <property type="match status" value="1"/>
</dbReference>
<dbReference type="PROSITE" id="PS51188">
    <property type="entry name" value="ZF_CR"/>
    <property type="match status" value="1"/>
</dbReference>
<protein>
    <recommendedName>
        <fullName evidence="1">Chaperone protein DnaJ</fullName>
    </recommendedName>
</protein>
<comment type="function">
    <text evidence="1">Participates actively in the response to hyperosmotic and heat shock by preventing the aggregation of stress-denatured proteins and by disaggregating proteins, also in an autonomous, DnaK-independent fashion. Unfolded proteins bind initially to DnaJ; upon interaction with the DnaJ-bound protein, DnaK hydrolyzes its bound ATP, resulting in the formation of a stable complex. GrpE releases ADP from DnaK; ATP binding to DnaK triggers the release of the substrate protein, thus completing the reaction cycle. Several rounds of ATP-dependent interactions between DnaJ, DnaK and GrpE are required for fully efficient folding. Also involved, together with DnaK and GrpE, in the DNA replication of plasmids through activation of initiation proteins.</text>
</comment>
<comment type="cofactor">
    <cofactor evidence="1">
        <name>Zn(2+)</name>
        <dbReference type="ChEBI" id="CHEBI:29105"/>
    </cofactor>
    <text evidence="1">Binds 2 Zn(2+) ions per monomer.</text>
</comment>
<comment type="subunit">
    <text evidence="1">Homodimer.</text>
</comment>
<comment type="subcellular location">
    <subcellularLocation>
        <location evidence="1">Cytoplasm</location>
    </subcellularLocation>
</comment>
<comment type="domain">
    <text evidence="1">The J domain is necessary and sufficient to stimulate DnaK ATPase activity. Zinc center 1 plays an important role in the autonomous, DnaK-independent chaperone activity of DnaJ. Zinc center 2 is essential for interaction with DnaK and for DnaJ activity.</text>
</comment>
<comment type="similarity">
    <text evidence="1">Belongs to the DnaJ family.</text>
</comment>
<evidence type="ECO:0000255" key="1">
    <source>
        <dbReference type="HAMAP-Rule" id="MF_01152"/>
    </source>
</evidence>
<evidence type="ECO:0000256" key="2">
    <source>
        <dbReference type="SAM" id="MobiDB-lite"/>
    </source>
</evidence>
<gene>
    <name evidence="1" type="primary">dnaJ</name>
    <name type="ordered locus">ACICU_03644</name>
</gene>
<keyword id="KW-0143">Chaperone</keyword>
<keyword id="KW-0963">Cytoplasm</keyword>
<keyword id="KW-0235">DNA replication</keyword>
<keyword id="KW-0479">Metal-binding</keyword>
<keyword id="KW-0677">Repeat</keyword>
<keyword id="KW-0346">Stress response</keyword>
<keyword id="KW-0862">Zinc</keyword>
<keyword id="KW-0863">Zinc-finger</keyword>
<sequence>MAKRDYYEVLGVSKTASDDEIKKAYRKLAMKYHPDRNPDNAEAEEKFKEASEAYEILSDSEKRSMYDRMGHNAFEGGFGGAGGGFGGFSAEDIFSQFGDIFGGAFGGGGRQQRQRRGSDLRYVMELTLEEAVKGVKKTITFTAPAPCDVCDGKGSKNPKDVETCKTCHGSGQVRMQQGFFSVQQTCGTCRGQGKIIKNPCHACHGSGVADRQQTLEVTIPAGVDNGDRVRLSGKGEAIRDGQAGDLYVEVVVREHEIFQRDGADLYMDVPVSIADAALGKEIEIPTLEGRVSLKIPEGTQTGKLFRLRGKGVRPVRSSMVGDLLCRIVVETPVNLTSRQRELLKELQASFDGEDSASSPKKKSFFDRLFD</sequence>
<proteinExistence type="inferred from homology"/>
<reference key="1">
    <citation type="journal article" date="2008" name="Antimicrob. Agents Chemother.">
        <title>Whole-genome pyrosequencing of an epidemic multidrug-resistant Acinetobacter baumannii strain belonging to the European clone II group.</title>
        <authorList>
            <person name="Iacono M."/>
            <person name="Villa L."/>
            <person name="Fortini D."/>
            <person name="Bordoni R."/>
            <person name="Imperi F."/>
            <person name="Bonnal R.J."/>
            <person name="Sicheritz-Ponten T."/>
            <person name="De Bellis G."/>
            <person name="Visca P."/>
            <person name="Cassone A."/>
            <person name="Carattoli A."/>
        </authorList>
    </citation>
    <scope>NUCLEOTIDE SEQUENCE [LARGE SCALE GENOMIC DNA]</scope>
    <source>
        <strain>ACICU</strain>
    </source>
</reference>